<evidence type="ECO:0000255" key="1">
    <source>
        <dbReference type="HAMAP-Rule" id="MF_00191"/>
    </source>
</evidence>
<dbReference type="EC" id="1.17.7.4" evidence="1"/>
<dbReference type="EMBL" id="AE017221">
    <property type="protein sequence ID" value="AAS82325.1"/>
    <property type="molecule type" value="Genomic_DNA"/>
</dbReference>
<dbReference type="RefSeq" id="WP_011174333.1">
    <property type="nucleotide sequence ID" value="NC_005835.1"/>
</dbReference>
<dbReference type="SMR" id="Q72G65"/>
<dbReference type="KEGG" id="tth:TT_C1983"/>
<dbReference type="eggNOG" id="COG0761">
    <property type="taxonomic scope" value="Bacteria"/>
</dbReference>
<dbReference type="HOGENOM" id="CLU_027486_1_0_0"/>
<dbReference type="OrthoDB" id="9777362at2"/>
<dbReference type="UniPathway" id="UPA00056">
    <property type="reaction ID" value="UER00097"/>
</dbReference>
<dbReference type="UniPathway" id="UPA00059">
    <property type="reaction ID" value="UER00105"/>
</dbReference>
<dbReference type="Proteomes" id="UP000000592">
    <property type="component" value="Chromosome"/>
</dbReference>
<dbReference type="GO" id="GO:0051539">
    <property type="term" value="F:4 iron, 4 sulfur cluster binding"/>
    <property type="evidence" value="ECO:0007669"/>
    <property type="project" value="UniProtKB-UniRule"/>
</dbReference>
<dbReference type="GO" id="GO:0051745">
    <property type="term" value="F:4-hydroxy-3-methylbut-2-enyl diphosphate reductase activity"/>
    <property type="evidence" value="ECO:0007669"/>
    <property type="project" value="UniProtKB-UniRule"/>
</dbReference>
<dbReference type="GO" id="GO:0046872">
    <property type="term" value="F:metal ion binding"/>
    <property type="evidence" value="ECO:0007669"/>
    <property type="project" value="UniProtKB-KW"/>
</dbReference>
<dbReference type="GO" id="GO:0050992">
    <property type="term" value="P:dimethylallyl diphosphate biosynthetic process"/>
    <property type="evidence" value="ECO:0007669"/>
    <property type="project" value="UniProtKB-UniRule"/>
</dbReference>
<dbReference type="GO" id="GO:0019288">
    <property type="term" value="P:isopentenyl diphosphate biosynthetic process, methylerythritol 4-phosphate pathway"/>
    <property type="evidence" value="ECO:0007669"/>
    <property type="project" value="UniProtKB-UniRule"/>
</dbReference>
<dbReference type="GO" id="GO:0016114">
    <property type="term" value="P:terpenoid biosynthetic process"/>
    <property type="evidence" value="ECO:0007669"/>
    <property type="project" value="UniProtKB-UniRule"/>
</dbReference>
<dbReference type="CDD" id="cd13944">
    <property type="entry name" value="lytB_ispH"/>
    <property type="match status" value="1"/>
</dbReference>
<dbReference type="Gene3D" id="3.40.50.11270">
    <property type="match status" value="1"/>
</dbReference>
<dbReference type="Gene3D" id="3.40.1010.20">
    <property type="entry name" value="4-hydroxy-3-methylbut-2-enyl diphosphate reductase, catalytic domain"/>
    <property type="match status" value="2"/>
</dbReference>
<dbReference type="HAMAP" id="MF_00191">
    <property type="entry name" value="IspH"/>
    <property type="match status" value="1"/>
</dbReference>
<dbReference type="InterPro" id="IPR003451">
    <property type="entry name" value="LytB/IspH"/>
</dbReference>
<dbReference type="NCBIfam" id="TIGR00216">
    <property type="entry name" value="ispH_lytB"/>
    <property type="match status" value="1"/>
</dbReference>
<dbReference type="PANTHER" id="PTHR30426">
    <property type="entry name" value="4-HYDROXY-3-METHYLBUT-2-ENYL DIPHOSPHATE REDUCTASE"/>
    <property type="match status" value="1"/>
</dbReference>
<dbReference type="PANTHER" id="PTHR30426:SF0">
    <property type="entry name" value="4-HYDROXY-3-METHYLBUT-2-ENYL DIPHOSPHATE REDUCTASE"/>
    <property type="match status" value="1"/>
</dbReference>
<dbReference type="Pfam" id="PF02401">
    <property type="entry name" value="LYTB"/>
    <property type="match status" value="1"/>
</dbReference>
<sequence length="340" mass="37750">MGGMSGLRRVYLARPRGFCAGVVMAIEAVERWAEALKEKGELVVYHEIVHNRVVVERLQAKGVHFVEDLAEVERLRRERRLADTVVFSAHGHPPAVRRQAAEMGLTVLDATCPLVTKVHTEAKRYAKEGYWILLIGDSADHQEIKGTYGEAPERTILVAVHTHVGKDPRLADPRTVEVPDPERVVVLTQTTLSVDDTLATIAILKKRFPKLVVPSRKDLCYATQNRQEAVKRIAPKVEAFLVLTSPHSSNGMRLLELAQSLVGRAYRLERPEELRPEWLEGVESLGITSAASTPEDLVQGVVARLKAQNPGLEVVEEGAWETIAFREPKPLSPEEVLKGA</sequence>
<feature type="chain" id="PRO_0000128882" description="4-hydroxy-3-methylbut-2-enyl diphosphate reductase">
    <location>
        <begin position="1"/>
        <end position="340"/>
    </location>
</feature>
<feature type="active site" description="Proton donor" evidence="1">
    <location>
        <position position="143"/>
    </location>
</feature>
<feature type="binding site" evidence="1">
    <location>
        <position position="19"/>
    </location>
    <ligand>
        <name>[4Fe-4S] cluster</name>
        <dbReference type="ChEBI" id="CHEBI:49883"/>
    </ligand>
</feature>
<feature type="binding site" evidence="1">
    <location>
        <position position="50"/>
    </location>
    <ligand>
        <name>(2E)-4-hydroxy-3-methylbut-2-enyl diphosphate</name>
        <dbReference type="ChEBI" id="CHEBI:128753"/>
    </ligand>
</feature>
<feature type="binding site" evidence="1">
    <location>
        <position position="50"/>
    </location>
    <ligand>
        <name>dimethylallyl diphosphate</name>
        <dbReference type="ChEBI" id="CHEBI:57623"/>
    </ligand>
</feature>
<feature type="binding site" evidence="1">
    <location>
        <position position="50"/>
    </location>
    <ligand>
        <name>isopentenyl diphosphate</name>
        <dbReference type="ChEBI" id="CHEBI:128769"/>
    </ligand>
</feature>
<feature type="binding site" evidence="1">
    <location>
        <position position="90"/>
    </location>
    <ligand>
        <name>(2E)-4-hydroxy-3-methylbut-2-enyl diphosphate</name>
        <dbReference type="ChEBI" id="CHEBI:128753"/>
    </ligand>
</feature>
<feature type="binding site" evidence="1">
    <location>
        <position position="90"/>
    </location>
    <ligand>
        <name>dimethylallyl diphosphate</name>
        <dbReference type="ChEBI" id="CHEBI:57623"/>
    </ligand>
</feature>
<feature type="binding site" evidence="1">
    <location>
        <position position="90"/>
    </location>
    <ligand>
        <name>isopentenyl diphosphate</name>
        <dbReference type="ChEBI" id="CHEBI:128769"/>
    </ligand>
</feature>
<feature type="binding site" evidence="1">
    <location>
        <position position="112"/>
    </location>
    <ligand>
        <name>[4Fe-4S] cluster</name>
        <dbReference type="ChEBI" id="CHEBI:49883"/>
    </ligand>
</feature>
<feature type="binding site" evidence="1">
    <location>
        <position position="141"/>
    </location>
    <ligand>
        <name>(2E)-4-hydroxy-3-methylbut-2-enyl diphosphate</name>
        <dbReference type="ChEBI" id="CHEBI:128753"/>
    </ligand>
</feature>
<feature type="binding site" evidence="1">
    <location>
        <position position="141"/>
    </location>
    <ligand>
        <name>dimethylallyl diphosphate</name>
        <dbReference type="ChEBI" id="CHEBI:57623"/>
    </ligand>
</feature>
<feature type="binding site" evidence="1">
    <location>
        <position position="141"/>
    </location>
    <ligand>
        <name>isopentenyl diphosphate</name>
        <dbReference type="ChEBI" id="CHEBI:128769"/>
    </ligand>
</feature>
<feature type="binding site" evidence="1">
    <location>
        <position position="190"/>
    </location>
    <ligand>
        <name>(2E)-4-hydroxy-3-methylbut-2-enyl diphosphate</name>
        <dbReference type="ChEBI" id="CHEBI:128753"/>
    </ligand>
</feature>
<feature type="binding site" evidence="1">
    <location>
        <position position="220"/>
    </location>
    <ligand>
        <name>[4Fe-4S] cluster</name>
        <dbReference type="ChEBI" id="CHEBI:49883"/>
    </ligand>
</feature>
<feature type="binding site" evidence="1">
    <location>
        <position position="248"/>
    </location>
    <ligand>
        <name>(2E)-4-hydroxy-3-methylbut-2-enyl diphosphate</name>
        <dbReference type="ChEBI" id="CHEBI:128753"/>
    </ligand>
</feature>
<feature type="binding site" evidence="1">
    <location>
        <position position="248"/>
    </location>
    <ligand>
        <name>dimethylallyl diphosphate</name>
        <dbReference type="ChEBI" id="CHEBI:57623"/>
    </ligand>
</feature>
<feature type="binding site" evidence="1">
    <location>
        <position position="248"/>
    </location>
    <ligand>
        <name>isopentenyl diphosphate</name>
        <dbReference type="ChEBI" id="CHEBI:128769"/>
    </ligand>
</feature>
<feature type="binding site" evidence="1">
    <location>
        <position position="249"/>
    </location>
    <ligand>
        <name>(2E)-4-hydroxy-3-methylbut-2-enyl diphosphate</name>
        <dbReference type="ChEBI" id="CHEBI:128753"/>
    </ligand>
</feature>
<feature type="binding site" evidence="1">
    <location>
        <position position="249"/>
    </location>
    <ligand>
        <name>dimethylallyl diphosphate</name>
        <dbReference type="ChEBI" id="CHEBI:57623"/>
    </ligand>
</feature>
<feature type="binding site" evidence="1">
    <location>
        <position position="249"/>
    </location>
    <ligand>
        <name>isopentenyl diphosphate</name>
        <dbReference type="ChEBI" id="CHEBI:128769"/>
    </ligand>
</feature>
<feature type="binding site" evidence="1">
    <location>
        <position position="250"/>
    </location>
    <ligand>
        <name>(2E)-4-hydroxy-3-methylbut-2-enyl diphosphate</name>
        <dbReference type="ChEBI" id="CHEBI:128753"/>
    </ligand>
</feature>
<feature type="binding site" evidence="1">
    <location>
        <position position="250"/>
    </location>
    <ligand>
        <name>dimethylallyl diphosphate</name>
        <dbReference type="ChEBI" id="CHEBI:57623"/>
    </ligand>
</feature>
<feature type="binding site" evidence="1">
    <location>
        <position position="250"/>
    </location>
    <ligand>
        <name>isopentenyl diphosphate</name>
        <dbReference type="ChEBI" id="CHEBI:128769"/>
    </ligand>
</feature>
<feature type="binding site" evidence="1">
    <location>
        <position position="292"/>
    </location>
    <ligand>
        <name>(2E)-4-hydroxy-3-methylbut-2-enyl diphosphate</name>
        <dbReference type="ChEBI" id="CHEBI:128753"/>
    </ligand>
</feature>
<feature type="binding site" evidence="1">
    <location>
        <position position="292"/>
    </location>
    <ligand>
        <name>dimethylallyl diphosphate</name>
        <dbReference type="ChEBI" id="CHEBI:57623"/>
    </ligand>
</feature>
<feature type="binding site" evidence="1">
    <location>
        <position position="292"/>
    </location>
    <ligand>
        <name>isopentenyl diphosphate</name>
        <dbReference type="ChEBI" id="CHEBI:128769"/>
    </ligand>
</feature>
<organism>
    <name type="scientific">Thermus thermophilus (strain ATCC BAA-163 / DSM 7039 / HB27)</name>
    <dbReference type="NCBI Taxonomy" id="262724"/>
    <lineage>
        <taxon>Bacteria</taxon>
        <taxon>Thermotogati</taxon>
        <taxon>Deinococcota</taxon>
        <taxon>Deinococci</taxon>
        <taxon>Thermales</taxon>
        <taxon>Thermaceae</taxon>
        <taxon>Thermus</taxon>
    </lineage>
</organism>
<name>ISPH_THET2</name>
<proteinExistence type="inferred from homology"/>
<reference key="1">
    <citation type="journal article" date="2004" name="Nat. Biotechnol.">
        <title>The genome sequence of the extreme thermophile Thermus thermophilus.</title>
        <authorList>
            <person name="Henne A."/>
            <person name="Brueggemann H."/>
            <person name="Raasch C."/>
            <person name="Wiezer A."/>
            <person name="Hartsch T."/>
            <person name="Liesegang H."/>
            <person name="Johann A."/>
            <person name="Lienard T."/>
            <person name="Gohl O."/>
            <person name="Martinez-Arias R."/>
            <person name="Jacobi C."/>
            <person name="Starkuviene V."/>
            <person name="Schlenczeck S."/>
            <person name="Dencker S."/>
            <person name="Huber R."/>
            <person name="Klenk H.-P."/>
            <person name="Kramer W."/>
            <person name="Merkl R."/>
            <person name="Gottschalk G."/>
            <person name="Fritz H.-J."/>
        </authorList>
    </citation>
    <scope>NUCLEOTIDE SEQUENCE [LARGE SCALE GENOMIC DNA]</scope>
    <source>
        <strain>ATCC BAA-163 / DSM 7039 / HB27</strain>
    </source>
</reference>
<protein>
    <recommendedName>
        <fullName evidence="1">4-hydroxy-3-methylbut-2-enyl diphosphate reductase</fullName>
        <shortName evidence="1">HMBPP reductase</shortName>
        <ecNumber evidence="1">1.17.7.4</ecNumber>
    </recommendedName>
</protein>
<accession>Q72G65</accession>
<gene>
    <name evidence="1" type="primary">ispH</name>
    <name type="synonym">lytB</name>
    <name type="ordered locus">TT_C1983</name>
</gene>
<keyword id="KW-0004">4Fe-4S</keyword>
<keyword id="KW-0408">Iron</keyword>
<keyword id="KW-0411">Iron-sulfur</keyword>
<keyword id="KW-0414">Isoprene biosynthesis</keyword>
<keyword id="KW-0479">Metal-binding</keyword>
<keyword id="KW-0560">Oxidoreductase</keyword>
<comment type="function">
    <text evidence="1">Catalyzes the conversion of 1-hydroxy-2-methyl-2-(E)-butenyl 4-diphosphate (HMBPP) into a mixture of isopentenyl diphosphate (IPP) and dimethylallyl diphosphate (DMAPP). Acts in the terminal step of the DOXP/MEP pathway for isoprenoid precursor biosynthesis.</text>
</comment>
<comment type="catalytic activity">
    <reaction evidence="1">
        <text>isopentenyl diphosphate + 2 oxidized [2Fe-2S]-[ferredoxin] + H2O = (2E)-4-hydroxy-3-methylbut-2-enyl diphosphate + 2 reduced [2Fe-2S]-[ferredoxin] + 2 H(+)</text>
        <dbReference type="Rhea" id="RHEA:24488"/>
        <dbReference type="Rhea" id="RHEA-COMP:10000"/>
        <dbReference type="Rhea" id="RHEA-COMP:10001"/>
        <dbReference type="ChEBI" id="CHEBI:15377"/>
        <dbReference type="ChEBI" id="CHEBI:15378"/>
        <dbReference type="ChEBI" id="CHEBI:33737"/>
        <dbReference type="ChEBI" id="CHEBI:33738"/>
        <dbReference type="ChEBI" id="CHEBI:128753"/>
        <dbReference type="ChEBI" id="CHEBI:128769"/>
        <dbReference type="EC" id="1.17.7.4"/>
    </reaction>
</comment>
<comment type="catalytic activity">
    <reaction evidence="1">
        <text>dimethylallyl diphosphate + 2 oxidized [2Fe-2S]-[ferredoxin] + H2O = (2E)-4-hydroxy-3-methylbut-2-enyl diphosphate + 2 reduced [2Fe-2S]-[ferredoxin] + 2 H(+)</text>
        <dbReference type="Rhea" id="RHEA:24825"/>
        <dbReference type="Rhea" id="RHEA-COMP:10000"/>
        <dbReference type="Rhea" id="RHEA-COMP:10001"/>
        <dbReference type="ChEBI" id="CHEBI:15377"/>
        <dbReference type="ChEBI" id="CHEBI:15378"/>
        <dbReference type="ChEBI" id="CHEBI:33737"/>
        <dbReference type="ChEBI" id="CHEBI:33738"/>
        <dbReference type="ChEBI" id="CHEBI:57623"/>
        <dbReference type="ChEBI" id="CHEBI:128753"/>
        <dbReference type="EC" id="1.17.7.4"/>
    </reaction>
</comment>
<comment type="cofactor">
    <cofactor evidence="1">
        <name>[4Fe-4S] cluster</name>
        <dbReference type="ChEBI" id="CHEBI:49883"/>
    </cofactor>
    <text evidence="1">Binds 1 [4Fe-4S] cluster per subunit.</text>
</comment>
<comment type="pathway">
    <text evidence="1">Isoprenoid biosynthesis; dimethylallyl diphosphate biosynthesis; dimethylallyl diphosphate from (2E)-4-hydroxy-3-methylbutenyl diphosphate: step 1/1.</text>
</comment>
<comment type="pathway">
    <text evidence="1">Isoprenoid biosynthesis; isopentenyl diphosphate biosynthesis via DXP pathway; isopentenyl diphosphate from 1-deoxy-D-xylulose 5-phosphate: step 6/6.</text>
</comment>
<comment type="similarity">
    <text evidence="1">Belongs to the IspH family.</text>
</comment>